<protein>
    <recommendedName>
        <fullName evidence="1">Ribosomal RNA small subunit methyltransferase G</fullName>
        <ecNumber evidence="1">2.1.1.-</ecNumber>
    </recommendedName>
    <alternativeName>
        <fullName evidence="1">16S rRNA 7-methylguanosine methyltransferase</fullName>
        <shortName evidence="1">16S rRNA m7G methyltransferase</shortName>
    </alternativeName>
</protein>
<gene>
    <name evidence="1" type="primary">rsmG</name>
    <name type="ordered locus">CTN_1878</name>
</gene>
<evidence type="ECO:0000255" key="1">
    <source>
        <dbReference type="HAMAP-Rule" id="MF_00074"/>
    </source>
</evidence>
<dbReference type="EC" id="2.1.1.-" evidence="1"/>
<dbReference type="EMBL" id="CP000916">
    <property type="protein sequence ID" value="ACM24054.1"/>
    <property type="molecule type" value="Genomic_DNA"/>
</dbReference>
<dbReference type="RefSeq" id="WP_015920290.1">
    <property type="nucleotide sequence ID" value="NC_011978.1"/>
</dbReference>
<dbReference type="SMR" id="B9KAS1"/>
<dbReference type="STRING" id="309803.CTN_1878"/>
<dbReference type="KEGG" id="tna:CTN_1878"/>
<dbReference type="eggNOG" id="COG0357">
    <property type="taxonomic scope" value="Bacteria"/>
</dbReference>
<dbReference type="HOGENOM" id="CLU_065341_0_1_0"/>
<dbReference type="Proteomes" id="UP000000445">
    <property type="component" value="Chromosome"/>
</dbReference>
<dbReference type="GO" id="GO:0005829">
    <property type="term" value="C:cytosol"/>
    <property type="evidence" value="ECO:0007669"/>
    <property type="project" value="TreeGrafter"/>
</dbReference>
<dbReference type="GO" id="GO:0070043">
    <property type="term" value="F:rRNA (guanine-N7-)-methyltransferase activity"/>
    <property type="evidence" value="ECO:0007669"/>
    <property type="project" value="UniProtKB-UniRule"/>
</dbReference>
<dbReference type="CDD" id="cd02440">
    <property type="entry name" value="AdoMet_MTases"/>
    <property type="match status" value="1"/>
</dbReference>
<dbReference type="Gene3D" id="3.40.50.150">
    <property type="entry name" value="Vaccinia Virus protein VP39"/>
    <property type="match status" value="1"/>
</dbReference>
<dbReference type="HAMAP" id="MF_00074">
    <property type="entry name" value="16SrRNA_methyltr_G"/>
    <property type="match status" value="1"/>
</dbReference>
<dbReference type="InterPro" id="IPR003682">
    <property type="entry name" value="rRNA_ssu_MeTfrase_G"/>
</dbReference>
<dbReference type="InterPro" id="IPR029063">
    <property type="entry name" value="SAM-dependent_MTases_sf"/>
</dbReference>
<dbReference type="NCBIfam" id="TIGR00138">
    <property type="entry name" value="rsmG_gidB"/>
    <property type="match status" value="1"/>
</dbReference>
<dbReference type="PANTHER" id="PTHR31760">
    <property type="entry name" value="S-ADENOSYL-L-METHIONINE-DEPENDENT METHYLTRANSFERASES SUPERFAMILY PROTEIN"/>
    <property type="match status" value="1"/>
</dbReference>
<dbReference type="PANTHER" id="PTHR31760:SF0">
    <property type="entry name" value="S-ADENOSYL-L-METHIONINE-DEPENDENT METHYLTRANSFERASES SUPERFAMILY PROTEIN"/>
    <property type="match status" value="1"/>
</dbReference>
<dbReference type="Pfam" id="PF02527">
    <property type="entry name" value="GidB"/>
    <property type="match status" value="1"/>
</dbReference>
<dbReference type="PIRSF" id="PIRSF003078">
    <property type="entry name" value="GidB"/>
    <property type="match status" value="1"/>
</dbReference>
<dbReference type="SUPFAM" id="SSF53335">
    <property type="entry name" value="S-adenosyl-L-methionine-dependent methyltransferases"/>
    <property type="match status" value="1"/>
</dbReference>
<accession>B9KAS1</accession>
<name>RSMG_THENN</name>
<comment type="function">
    <text evidence="1">Specifically methylates the N7 position of a guanine in 16S rRNA.</text>
</comment>
<comment type="subcellular location">
    <subcellularLocation>
        <location evidence="1">Cytoplasm</location>
    </subcellularLocation>
</comment>
<comment type="similarity">
    <text evidence="1">Belongs to the methyltransferase superfamily. RNA methyltransferase RsmG family.</text>
</comment>
<organism>
    <name type="scientific">Thermotoga neapolitana (strain ATCC 49049 / DSM 4359 / NBRC 107923 / NS-E)</name>
    <dbReference type="NCBI Taxonomy" id="309803"/>
    <lineage>
        <taxon>Bacteria</taxon>
        <taxon>Thermotogati</taxon>
        <taxon>Thermotogota</taxon>
        <taxon>Thermotogae</taxon>
        <taxon>Thermotogales</taxon>
        <taxon>Thermotogaceae</taxon>
        <taxon>Thermotoga</taxon>
    </lineage>
</organism>
<keyword id="KW-0963">Cytoplasm</keyword>
<keyword id="KW-0489">Methyltransferase</keyword>
<keyword id="KW-0698">rRNA processing</keyword>
<keyword id="KW-0949">S-adenosyl-L-methionine</keyword>
<keyword id="KW-0808">Transferase</keyword>
<sequence length="229" mass="26339">MDFLRDVLQEYGVRFEESQIEKTFRYLNELLNSPHNLTALRSLDSAVHKNVAEILIPLKHENLRGSLLDVGSGNGVPGLILAIFFPELKVTLLDSKEKAVQFLEHVVRKLNLENAAVVKERAENFSREHREEYDYATARAVARLNTLVEICAPAVRIGGKLLFYKGPSFEEELKEARKALDELKVELEEVRRYTLKTGEQRCLLVLRKTDRSPEKYPRRVGIPFKRPLL</sequence>
<feature type="chain" id="PRO_1000118206" description="Ribosomal RNA small subunit methyltransferase G">
    <location>
        <begin position="1"/>
        <end position="229"/>
    </location>
</feature>
<feature type="binding site" evidence="1">
    <location>
        <position position="71"/>
    </location>
    <ligand>
        <name>S-adenosyl-L-methionine</name>
        <dbReference type="ChEBI" id="CHEBI:59789"/>
    </ligand>
</feature>
<feature type="binding site" evidence="1">
    <location>
        <begin position="122"/>
        <end position="123"/>
    </location>
    <ligand>
        <name>S-adenosyl-L-methionine</name>
        <dbReference type="ChEBI" id="CHEBI:59789"/>
    </ligand>
</feature>
<feature type="binding site" evidence="1">
    <location>
        <position position="139"/>
    </location>
    <ligand>
        <name>S-adenosyl-L-methionine</name>
        <dbReference type="ChEBI" id="CHEBI:59789"/>
    </ligand>
</feature>
<reference key="1">
    <citation type="submission" date="2007-11" db="EMBL/GenBank/DDBJ databases">
        <title>The genome sequence of the hyperthermophilic bacterium Thermotoga neapolitana.</title>
        <authorList>
            <person name="Lim S.K."/>
            <person name="Kim J.S."/>
            <person name="Cha S.H."/>
            <person name="Park B.C."/>
            <person name="Lee D.S."/>
            <person name="Tae H.S."/>
            <person name="Kim S.-J."/>
            <person name="Kim J.J."/>
            <person name="Park K.J."/>
            <person name="Lee S.Y."/>
        </authorList>
    </citation>
    <scope>NUCLEOTIDE SEQUENCE [LARGE SCALE GENOMIC DNA]</scope>
    <source>
        <strain>ATCC 49049 / DSM 4359 / NBRC 107923 / NS-E</strain>
    </source>
</reference>
<proteinExistence type="inferred from homology"/>